<reference key="1">
    <citation type="submission" date="2006-08" db="EMBL/GenBank/DDBJ databases">
        <title>Positive selection in transcription factor genes on the human lineage.</title>
        <authorList>
            <person name="Nickel G.C."/>
            <person name="Tefft D.L."/>
            <person name="Trevarthen K."/>
            <person name="Funt J."/>
            <person name="Adams M.D."/>
        </authorList>
    </citation>
    <scope>NUCLEOTIDE SEQUENCE [GENOMIC DNA]</scope>
</reference>
<comment type="function">
    <text evidence="1">Embryonic stem (ES) cell-specific transcription factor required to regulate ES cell pluripotency. Binds telomeres and plays a key role in genomic stability in ES cells by regulating telomere elongation. Acts as an activator of spontaneous telomere sister chromatid exchange (T-SCE) and telomere elongation in undifferentiated ES cells (By similarity).</text>
</comment>
<comment type="subcellular location">
    <subcellularLocation>
        <location evidence="3">Nucleus</location>
    </subcellularLocation>
    <subcellularLocation>
        <location evidence="1">Chromosome</location>
        <location evidence="1">Telomere</location>
    </subcellularLocation>
</comment>
<proteinExistence type="inferred from homology"/>
<accession>A2T7G6</accession>
<feature type="chain" id="PRO_0000285481" description="Zinc finger and SCAN domain-containing protein 4">
    <location>
        <begin position="1"/>
        <end position="433"/>
    </location>
</feature>
<feature type="domain" description="SCAN box" evidence="3">
    <location>
        <begin position="44"/>
        <end position="126"/>
    </location>
</feature>
<feature type="zinc finger region" description="C2H2-type 1" evidence="2">
    <location>
        <begin position="312"/>
        <end position="334"/>
    </location>
</feature>
<feature type="zinc finger region" description="C2H2-type 2" evidence="2">
    <location>
        <begin position="340"/>
        <end position="362"/>
    </location>
</feature>
<feature type="zinc finger region" description="C2H2-type 3" evidence="2">
    <location>
        <begin position="368"/>
        <end position="390"/>
    </location>
</feature>
<feature type="zinc finger region" description="C2H2-type 4" evidence="2">
    <location>
        <begin position="396"/>
        <end position="418"/>
    </location>
</feature>
<feature type="region of interest" description="Disordered" evidence="4">
    <location>
        <begin position="162"/>
        <end position="199"/>
    </location>
</feature>
<feature type="region of interest" description="Disordered" evidence="4">
    <location>
        <begin position="272"/>
        <end position="298"/>
    </location>
</feature>
<feature type="region of interest" description="Disordered" evidence="4">
    <location>
        <begin position="414"/>
        <end position="433"/>
    </location>
</feature>
<feature type="compositionally biased region" description="Polar residues" evidence="4">
    <location>
        <begin position="162"/>
        <end position="184"/>
    </location>
</feature>
<feature type="compositionally biased region" description="Polar residues" evidence="4">
    <location>
        <begin position="277"/>
        <end position="298"/>
    </location>
</feature>
<protein>
    <recommendedName>
        <fullName>Zinc finger and SCAN domain-containing protein 4</fullName>
    </recommendedName>
</protein>
<evidence type="ECO:0000250" key="1"/>
<evidence type="ECO:0000255" key="2">
    <source>
        <dbReference type="PROSITE-ProRule" id="PRU00042"/>
    </source>
</evidence>
<evidence type="ECO:0000255" key="3">
    <source>
        <dbReference type="PROSITE-ProRule" id="PRU00187"/>
    </source>
</evidence>
<evidence type="ECO:0000256" key="4">
    <source>
        <dbReference type="SAM" id="MobiDB-lite"/>
    </source>
</evidence>
<dbReference type="EMBL" id="DQ977470">
    <property type="protein sequence ID" value="ABM89244.1"/>
    <property type="molecule type" value="Genomic_DNA"/>
</dbReference>
<dbReference type="RefSeq" id="XP_054320584.1">
    <property type="nucleotide sequence ID" value="XM_054464609.1"/>
</dbReference>
<dbReference type="SMR" id="A2T7G6"/>
<dbReference type="GeneID" id="129020365"/>
<dbReference type="GO" id="GO:0000781">
    <property type="term" value="C:chromosome, telomeric region"/>
    <property type="evidence" value="ECO:0000250"/>
    <property type="project" value="UniProtKB"/>
</dbReference>
<dbReference type="GO" id="GO:0005634">
    <property type="term" value="C:nucleus"/>
    <property type="evidence" value="ECO:0007669"/>
    <property type="project" value="UniProtKB-SubCell"/>
</dbReference>
<dbReference type="GO" id="GO:0000981">
    <property type="term" value="F:DNA-binding transcription factor activity, RNA polymerase II-specific"/>
    <property type="evidence" value="ECO:0007669"/>
    <property type="project" value="TreeGrafter"/>
</dbReference>
<dbReference type="GO" id="GO:0000978">
    <property type="term" value="F:RNA polymerase II cis-regulatory region sequence-specific DNA binding"/>
    <property type="evidence" value="ECO:0007669"/>
    <property type="project" value="TreeGrafter"/>
</dbReference>
<dbReference type="GO" id="GO:0008270">
    <property type="term" value="F:zinc ion binding"/>
    <property type="evidence" value="ECO:0007669"/>
    <property type="project" value="UniProtKB-KW"/>
</dbReference>
<dbReference type="GO" id="GO:0010833">
    <property type="term" value="P:telomere maintenance via telomere lengthening"/>
    <property type="evidence" value="ECO:0000250"/>
    <property type="project" value="UniProtKB"/>
</dbReference>
<dbReference type="CDD" id="cd07936">
    <property type="entry name" value="SCAN"/>
    <property type="match status" value="1"/>
</dbReference>
<dbReference type="FunFam" id="1.10.4020.10:FF:000004">
    <property type="entry name" value="Zinc finger and SCAN domain containing 4"/>
    <property type="match status" value="1"/>
</dbReference>
<dbReference type="FunFam" id="3.30.160.60:FF:001615">
    <property type="entry name" value="Zinc finger and SCAN domain containing 4"/>
    <property type="match status" value="1"/>
</dbReference>
<dbReference type="FunFam" id="3.30.160.60:FF:001779">
    <property type="entry name" value="Zinc finger and SCAN domain containing 4"/>
    <property type="match status" value="1"/>
</dbReference>
<dbReference type="FunFam" id="3.30.160.60:FF:001992">
    <property type="entry name" value="Zinc finger and SCAN domain-containing protein 4"/>
    <property type="match status" value="1"/>
</dbReference>
<dbReference type="FunFam" id="3.30.160.60:FF:000358">
    <property type="entry name" value="zinc finger protein 24"/>
    <property type="match status" value="1"/>
</dbReference>
<dbReference type="Gene3D" id="3.30.160.60">
    <property type="entry name" value="Classic Zinc Finger"/>
    <property type="match status" value="4"/>
</dbReference>
<dbReference type="Gene3D" id="1.10.4020.10">
    <property type="entry name" value="DNA breaking-rejoining enzymes"/>
    <property type="match status" value="1"/>
</dbReference>
<dbReference type="InterPro" id="IPR003309">
    <property type="entry name" value="SCAN_dom"/>
</dbReference>
<dbReference type="InterPro" id="IPR038269">
    <property type="entry name" value="SCAN_sf"/>
</dbReference>
<dbReference type="InterPro" id="IPR036236">
    <property type="entry name" value="Znf_C2H2_sf"/>
</dbReference>
<dbReference type="InterPro" id="IPR013087">
    <property type="entry name" value="Znf_C2H2_type"/>
</dbReference>
<dbReference type="PANTHER" id="PTHR23235">
    <property type="entry name" value="KRUEPPEL-LIKE TRANSCRIPTION FACTOR"/>
    <property type="match status" value="1"/>
</dbReference>
<dbReference type="PANTHER" id="PTHR23235:SF142">
    <property type="entry name" value="ZINC FINGER PROTEIN 384"/>
    <property type="match status" value="1"/>
</dbReference>
<dbReference type="Pfam" id="PF02023">
    <property type="entry name" value="SCAN"/>
    <property type="match status" value="1"/>
</dbReference>
<dbReference type="Pfam" id="PF00096">
    <property type="entry name" value="zf-C2H2"/>
    <property type="match status" value="4"/>
</dbReference>
<dbReference type="SMART" id="SM00431">
    <property type="entry name" value="SCAN"/>
    <property type="match status" value="1"/>
</dbReference>
<dbReference type="SMART" id="SM00355">
    <property type="entry name" value="ZnF_C2H2"/>
    <property type="match status" value="4"/>
</dbReference>
<dbReference type="SUPFAM" id="SSF57667">
    <property type="entry name" value="beta-beta-alpha zinc fingers"/>
    <property type="match status" value="2"/>
</dbReference>
<dbReference type="SUPFAM" id="SSF47353">
    <property type="entry name" value="Retrovirus capsid dimerization domain-like"/>
    <property type="match status" value="1"/>
</dbReference>
<dbReference type="PROSITE" id="PS50804">
    <property type="entry name" value="SCAN_BOX"/>
    <property type="match status" value="1"/>
</dbReference>
<dbReference type="PROSITE" id="PS00028">
    <property type="entry name" value="ZINC_FINGER_C2H2_1"/>
    <property type="match status" value="4"/>
</dbReference>
<dbReference type="PROSITE" id="PS50157">
    <property type="entry name" value="ZINC_FINGER_C2H2_2"/>
    <property type="match status" value="4"/>
</dbReference>
<name>ZSCA4_PONPY</name>
<gene>
    <name type="primary">ZSCAN4</name>
</gene>
<keyword id="KW-0158">Chromosome</keyword>
<keyword id="KW-0238">DNA-binding</keyword>
<keyword id="KW-0479">Metal-binding</keyword>
<keyword id="KW-0539">Nucleus</keyword>
<keyword id="KW-0677">Repeat</keyword>
<keyword id="KW-0779">Telomere</keyword>
<keyword id="KW-0804">Transcription</keyword>
<keyword id="KW-0805">Transcription regulation</keyword>
<keyword id="KW-0862">Zinc</keyword>
<keyword id="KW-0863">Zinc-finger</keyword>
<organism>
    <name type="scientific">Pongo pygmaeus</name>
    <name type="common">Bornean orangutan</name>
    <dbReference type="NCBI Taxonomy" id="9600"/>
    <lineage>
        <taxon>Eukaryota</taxon>
        <taxon>Metazoa</taxon>
        <taxon>Chordata</taxon>
        <taxon>Craniata</taxon>
        <taxon>Vertebrata</taxon>
        <taxon>Euteleostomi</taxon>
        <taxon>Mammalia</taxon>
        <taxon>Eutheria</taxon>
        <taxon>Euarchontoglires</taxon>
        <taxon>Primates</taxon>
        <taxon>Haplorrhini</taxon>
        <taxon>Catarrhini</taxon>
        <taxon>Hominidae</taxon>
        <taxon>Pongo</taxon>
    </lineage>
</organism>
<sequence>MALDLRTIFQCEPSENNLGSENSEFRQSQGPAVQREEGISEFSRMVLNSFQDSNNSYARQELQRLYRIFHSWLQPEKHSKDEIISLLVLEQFMIGGHCNDKASVKEKWKSSGKNLERFMEDLTDDSINPPALVHVHMQGQEALFSEDMPLKDVIVHLTKQVSAQTPREANMGTPSQTSQDTSLETGEGCEDEQDGCNSSLKTTQVNENITNQGNQIVSLIIIQEENGPRSEEGGVSSDNPNNSKRAELVTARSQEGSINGITFQGVPMEMGAGCISQPEQSSPESALTHQSNEGNSTCEVHQKGSHGVRKSYKCEECPKVFKYLCHLLAHQRRHRNERPFVCPECQKGFFQISDLRVHQIIHTGKKPFTCSMCEKSFSHKTNLRSHERIHTGEKPYTCPFCKTSYRQSSTYHRHMRTHEKITPPSVPSTPEAS</sequence>